<accession>A7ZZ10</accession>
<sequence>MSPCENDTPINWKRNLIVAWLGCFLTGAAFSLVMPFLPLYVEQLGVTGHSALNMWSGIVFSITFLFSAIASPFWGGLADRKGRKLMLLRSALGMGIVMVLMGLAQNIWQFLILRALLGLLGGFVPNANALIATQVPRNKSGWALGTLSTGGVSGALLGPMAGGLLADSYGLRPVFFITASVLILCFFVTLFCIREKFQPVSKKEMLHMREVVTSLKNPKLVLSLFVTTLIIQVATGSIAPILTLYVRELAGNVSNVAFISGMIASVPGVAALLLSAPRLGKLGDRIGPEKILITALIFSVLLLIPMSYVQTPLQLGILRFLLGAADGALLPAVQTLLVYNSSNQIAGRIFSYNQSFRDIGNVTGPLMGAAISANYGFRAVFLVTAGVVLFNAVYSWNSLRRRRIPQVSN</sequence>
<name>MDTG_ECOHS</name>
<feature type="chain" id="PRO_0000316874" description="Multidrug resistance protein MdtG">
    <location>
        <begin position="1"/>
        <end position="409"/>
    </location>
</feature>
<feature type="transmembrane region" description="Helical" evidence="1">
    <location>
        <begin position="16"/>
        <end position="36"/>
    </location>
</feature>
<feature type="transmembrane region" description="Helical" evidence="1">
    <location>
        <begin position="58"/>
        <end position="78"/>
    </location>
</feature>
<feature type="transmembrane region" description="Helical" evidence="1">
    <location>
        <begin position="92"/>
        <end position="112"/>
    </location>
</feature>
<feature type="transmembrane region" description="Helical" evidence="1">
    <location>
        <begin position="115"/>
        <end position="135"/>
    </location>
</feature>
<feature type="transmembrane region" description="Helical" evidence="1">
    <location>
        <begin position="146"/>
        <end position="166"/>
    </location>
</feature>
<feature type="transmembrane region" description="Helical" evidence="1">
    <location>
        <begin position="173"/>
        <end position="193"/>
    </location>
</feature>
<feature type="transmembrane region" description="Helical" evidence="1">
    <location>
        <begin position="224"/>
        <end position="244"/>
    </location>
</feature>
<feature type="transmembrane region" description="Helical" evidence="1">
    <location>
        <begin position="256"/>
        <end position="276"/>
    </location>
</feature>
<feature type="transmembrane region" description="Helical" evidence="1">
    <location>
        <begin position="291"/>
        <end position="311"/>
    </location>
</feature>
<feature type="transmembrane region" description="Helical" evidence="1">
    <location>
        <begin position="379"/>
        <end position="399"/>
    </location>
</feature>
<organism>
    <name type="scientific">Escherichia coli O9:H4 (strain HS)</name>
    <dbReference type="NCBI Taxonomy" id="331112"/>
    <lineage>
        <taxon>Bacteria</taxon>
        <taxon>Pseudomonadati</taxon>
        <taxon>Pseudomonadota</taxon>
        <taxon>Gammaproteobacteria</taxon>
        <taxon>Enterobacterales</taxon>
        <taxon>Enterobacteriaceae</taxon>
        <taxon>Escherichia</taxon>
    </lineage>
</organism>
<dbReference type="EMBL" id="CP000802">
    <property type="protein sequence ID" value="ABV05514.1"/>
    <property type="molecule type" value="Genomic_DNA"/>
</dbReference>
<dbReference type="RefSeq" id="WP_000074166.1">
    <property type="nucleotide sequence ID" value="NC_009800.1"/>
</dbReference>
<dbReference type="SMR" id="A7ZZ10"/>
<dbReference type="KEGG" id="ecx:EcHS_A1175"/>
<dbReference type="HOGENOM" id="CLU_001265_57_3_6"/>
<dbReference type="GO" id="GO:0005886">
    <property type="term" value="C:plasma membrane"/>
    <property type="evidence" value="ECO:0007669"/>
    <property type="project" value="UniProtKB-SubCell"/>
</dbReference>
<dbReference type="GO" id="GO:0022857">
    <property type="term" value="F:transmembrane transporter activity"/>
    <property type="evidence" value="ECO:0007669"/>
    <property type="project" value="UniProtKB-UniRule"/>
</dbReference>
<dbReference type="GO" id="GO:0046677">
    <property type="term" value="P:response to antibiotic"/>
    <property type="evidence" value="ECO:0007669"/>
    <property type="project" value="UniProtKB-KW"/>
</dbReference>
<dbReference type="CDD" id="cd17391">
    <property type="entry name" value="MFS_MdtG_MDR_like"/>
    <property type="match status" value="1"/>
</dbReference>
<dbReference type="FunFam" id="1.20.1250.20:FF:000020">
    <property type="entry name" value="Multidrug resistance protein MdtG"/>
    <property type="match status" value="1"/>
</dbReference>
<dbReference type="FunFam" id="1.20.1250.20:FF:000022">
    <property type="entry name" value="Multidrug resistance protein MdtG"/>
    <property type="match status" value="1"/>
</dbReference>
<dbReference type="Gene3D" id="1.20.1250.20">
    <property type="entry name" value="MFS general substrate transporter like domains"/>
    <property type="match status" value="2"/>
</dbReference>
<dbReference type="HAMAP" id="MF_01528">
    <property type="entry name" value="MFS_MdtG"/>
    <property type="match status" value="1"/>
</dbReference>
<dbReference type="InterPro" id="IPR011701">
    <property type="entry name" value="MFS"/>
</dbReference>
<dbReference type="InterPro" id="IPR020846">
    <property type="entry name" value="MFS_dom"/>
</dbReference>
<dbReference type="InterPro" id="IPR050497">
    <property type="entry name" value="MFS_MdtG_subfamily"/>
</dbReference>
<dbReference type="InterPro" id="IPR036259">
    <property type="entry name" value="MFS_trans_sf"/>
</dbReference>
<dbReference type="InterPro" id="IPR023692">
    <property type="entry name" value="Mutidrug-R_MdtG"/>
</dbReference>
<dbReference type="InterPro" id="IPR001958">
    <property type="entry name" value="Tet-R_TetA/multi-R_MdtG-like"/>
</dbReference>
<dbReference type="NCBIfam" id="NF007372">
    <property type="entry name" value="PRK09874.1"/>
    <property type="match status" value="1"/>
</dbReference>
<dbReference type="PANTHER" id="PTHR43414">
    <property type="entry name" value="MULTIDRUG RESISTANCE PROTEIN MDTG"/>
    <property type="match status" value="1"/>
</dbReference>
<dbReference type="PANTHER" id="PTHR43414:SF6">
    <property type="entry name" value="MULTIDRUG RESISTANCE PROTEIN MDTG"/>
    <property type="match status" value="1"/>
</dbReference>
<dbReference type="Pfam" id="PF07690">
    <property type="entry name" value="MFS_1"/>
    <property type="match status" value="1"/>
</dbReference>
<dbReference type="PRINTS" id="PR01035">
    <property type="entry name" value="TCRTETA"/>
</dbReference>
<dbReference type="SUPFAM" id="SSF103473">
    <property type="entry name" value="MFS general substrate transporter"/>
    <property type="match status" value="1"/>
</dbReference>
<dbReference type="PROSITE" id="PS50850">
    <property type="entry name" value="MFS"/>
    <property type="match status" value="1"/>
</dbReference>
<keyword id="KW-0046">Antibiotic resistance</keyword>
<keyword id="KW-0997">Cell inner membrane</keyword>
<keyword id="KW-1003">Cell membrane</keyword>
<keyword id="KW-0472">Membrane</keyword>
<keyword id="KW-0812">Transmembrane</keyword>
<keyword id="KW-1133">Transmembrane helix</keyword>
<keyword id="KW-0813">Transport</keyword>
<proteinExistence type="inferred from homology"/>
<reference key="1">
    <citation type="journal article" date="2008" name="J. Bacteriol.">
        <title>The pangenome structure of Escherichia coli: comparative genomic analysis of E. coli commensal and pathogenic isolates.</title>
        <authorList>
            <person name="Rasko D.A."/>
            <person name="Rosovitz M.J."/>
            <person name="Myers G.S.A."/>
            <person name="Mongodin E.F."/>
            <person name="Fricke W.F."/>
            <person name="Gajer P."/>
            <person name="Crabtree J."/>
            <person name="Sebaihia M."/>
            <person name="Thomson N.R."/>
            <person name="Chaudhuri R."/>
            <person name="Henderson I.R."/>
            <person name="Sperandio V."/>
            <person name="Ravel J."/>
        </authorList>
    </citation>
    <scope>NUCLEOTIDE SEQUENCE [LARGE SCALE GENOMIC DNA]</scope>
    <source>
        <strain>HS</strain>
    </source>
</reference>
<gene>
    <name evidence="1" type="primary">mdtG</name>
    <name type="ordered locus">EcHS_A1175</name>
</gene>
<evidence type="ECO:0000255" key="1">
    <source>
        <dbReference type="HAMAP-Rule" id="MF_01528"/>
    </source>
</evidence>
<protein>
    <recommendedName>
        <fullName evidence="1">Multidrug resistance protein MdtG</fullName>
    </recommendedName>
</protein>
<comment type="function">
    <text evidence="1">Confers resistance to fosfomycin and deoxycholate.</text>
</comment>
<comment type="subcellular location">
    <subcellularLocation>
        <location evidence="1">Cell inner membrane</location>
        <topology evidence="1">Multi-pass membrane protein</topology>
    </subcellularLocation>
</comment>
<comment type="similarity">
    <text evidence="1">Belongs to the major facilitator superfamily. DHA1 family. MdtG (TC 2.A.1.2.20) subfamily.</text>
</comment>